<feature type="chain" id="PRO_1000098718" description="Glycerol kinase">
    <location>
        <begin position="1"/>
        <end position="495"/>
    </location>
</feature>
<feature type="binding site" evidence="1">
    <location>
        <position position="11"/>
    </location>
    <ligand>
        <name>ADP</name>
        <dbReference type="ChEBI" id="CHEBI:456216"/>
    </ligand>
</feature>
<feature type="binding site" evidence="1">
    <location>
        <position position="11"/>
    </location>
    <ligand>
        <name>ATP</name>
        <dbReference type="ChEBI" id="CHEBI:30616"/>
    </ligand>
</feature>
<feature type="binding site" evidence="1">
    <location>
        <position position="11"/>
    </location>
    <ligand>
        <name>sn-glycerol 3-phosphate</name>
        <dbReference type="ChEBI" id="CHEBI:57597"/>
    </ligand>
</feature>
<feature type="binding site" evidence="1">
    <location>
        <position position="12"/>
    </location>
    <ligand>
        <name>ATP</name>
        <dbReference type="ChEBI" id="CHEBI:30616"/>
    </ligand>
</feature>
<feature type="binding site" evidence="1">
    <location>
        <position position="13"/>
    </location>
    <ligand>
        <name>ATP</name>
        <dbReference type="ChEBI" id="CHEBI:30616"/>
    </ligand>
</feature>
<feature type="binding site" evidence="1">
    <location>
        <position position="15"/>
    </location>
    <ligand>
        <name>ADP</name>
        <dbReference type="ChEBI" id="CHEBI:456216"/>
    </ligand>
</feature>
<feature type="binding site" evidence="1">
    <location>
        <position position="81"/>
    </location>
    <ligand>
        <name>glycerol</name>
        <dbReference type="ChEBI" id="CHEBI:17754"/>
    </ligand>
</feature>
<feature type="binding site" evidence="1">
    <location>
        <position position="81"/>
    </location>
    <ligand>
        <name>sn-glycerol 3-phosphate</name>
        <dbReference type="ChEBI" id="CHEBI:57597"/>
    </ligand>
</feature>
<feature type="binding site" evidence="1">
    <location>
        <position position="82"/>
    </location>
    <ligand>
        <name>glycerol</name>
        <dbReference type="ChEBI" id="CHEBI:17754"/>
    </ligand>
</feature>
<feature type="binding site" evidence="1">
    <location>
        <position position="82"/>
    </location>
    <ligand>
        <name>sn-glycerol 3-phosphate</name>
        <dbReference type="ChEBI" id="CHEBI:57597"/>
    </ligand>
</feature>
<feature type="binding site" evidence="1">
    <location>
        <position position="133"/>
    </location>
    <ligand>
        <name>glycerol</name>
        <dbReference type="ChEBI" id="CHEBI:17754"/>
    </ligand>
</feature>
<feature type="binding site" evidence="1">
    <location>
        <position position="133"/>
    </location>
    <ligand>
        <name>sn-glycerol 3-phosphate</name>
        <dbReference type="ChEBI" id="CHEBI:57597"/>
    </ligand>
</feature>
<feature type="binding site" evidence="1">
    <location>
        <position position="242"/>
    </location>
    <ligand>
        <name>glycerol</name>
        <dbReference type="ChEBI" id="CHEBI:17754"/>
    </ligand>
</feature>
<feature type="binding site" evidence="1">
    <location>
        <position position="242"/>
    </location>
    <ligand>
        <name>sn-glycerol 3-phosphate</name>
        <dbReference type="ChEBI" id="CHEBI:57597"/>
    </ligand>
</feature>
<feature type="binding site" evidence="1">
    <location>
        <position position="243"/>
    </location>
    <ligand>
        <name>glycerol</name>
        <dbReference type="ChEBI" id="CHEBI:17754"/>
    </ligand>
</feature>
<feature type="binding site" evidence="1">
    <location>
        <position position="264"/>
    </location>
    <ligand>
        <name>ADP</name>
        <dbReference type="ChEBI" id="CHEBI:456216"/>
    </ligand>
</feature>
<feature type="binding site" evidence="1">
    <location>
        <position position="264"/>
    </location>
    <ligand>
        <name>ATP</name>
        <dbReference type="ChEBI" id="CHEBI:30616"/>
    </ligand>
</feature>
<feature type="binding site" evidence="1">
    <location>
        <position position="307"/>
    </location>
    <ligand>
        <name>ADP</name>
        <dbReference type="ChEBI" id="CHEBI:456216"/>
    </ligand>
</feature>
<feature type="binding site" evidence="1">
    <location>
        <position position="307"/>
    </location>
    <ligand>
        <name>ATP</name>
        <dbReference type="ChEBI" id="CHEBI:30616"/>
    </ligand>
</feature>
<feature type="binding site" evidence="1">
    <location>
        <position position="311"/>
    </location>
    <ligand>
        <name>ATP</name>
        <dbReference type="ChEBI" id="CHEBI:30616"/>
    </ligand>
</feature>
<feature type="binding site" evidence="1">
    <location>
        <position position="409"/>
    </location>
    <ligand>
        <name>ADP</name>
        <dbReference type="ChEBI" id="CHEBI:456216"/>
    </ligand>
</feature>
<feature type="binding site" evidence="1">
    <location>
        <position position="409"/>
    </location>
    <ligand>
        <name>ATP</name>
        <dbReference type="ChEBI" id="CHEBI:30616"/>
    </ligand>
</feature>
<feature type="binding site" evidence="1">
    <location>
        <position position="413"/>
    </location>
    <ligand>
        <name>ADP</name>
        <dbReference type="ChEBI" id="CHEBI:456216"/>
    </ligand>
</feature>
<organism>
    <name type="scientific">Borrelia hermsii (strain HS1 / DAH)</name>
    <dbReference type="NCBI Taxonomy" id="314723"/>
    <lineage>
        <taxon>Bacteria</taxon>
        <taxon>Pseudomonadati</taxon>
        <taxon>Spirochaetota</taxon>
        <taxon>Spirochaetia</taxon>
        <taxon>Spirochaetales</taxon>
        <taxon>Borreliaceae</taxon>
        <taxon>Borrelia</taxon>
    </lineage>
</organism>
<name>GLPK_BORHD</name>
<keyword id="KW-0067">ATP-binding</keyword>
<keyword id="KW-0319">Glycerol metabolism</keyword>
<keyword id="KW-0418">Kinase</keyword>
<keyword id="KW-0547">Nucleotide-binding</keyword>
<keyword id="KW-0808">Transferase</keyword>
<comment type="function">
    <text evidence="1">Key enzyme in the regulation of glycerol uptake and metabolism. Catalyzes the phosphorylation of glycerol to yield sn-glycerol 3-phosphate.</text>
</comment>
<comment type="catalytic activity">
    <reaction evidence="1">
        <text>glycerol + ATP = sn-glycerol 3-phosphate + ADP + H(+)</text>
        <dbReference type="Rhea" id="RHEA:21644"/>
        <dbReference type="ChEBI" id="CHEBI:15378"/>
        <dbReference type="ChEBI" id="CHEBI:17754"/>
        <dbReference type="ChEBI" id="CHEBI:30616"/>
        <dbReference type="ChEBI" id="CHEBI:57597"/>
        <dbReference type="ChEBI" id="CHEBI:456216"/>
        <dbReference type="EC" id="2.7.1.30"/>
    </reaction>
</comment>
<comment type="activity regulation">
    <text evidence="1">Inhibited by fructose 1,6-bisphosphate (FBP).</text>
</comment>
<comment type="pathway">
    <text evidence="1">Polyol metabolism; glycerol degradation via glycerol kinase pathway; sn-glycerol 3-phosphate from glycerol: step 1/1.</text>
</comment>
<comment type="similarity">
    <text evidence="1">Belongs to the FGGY kinase family.</text>
</comment>
<dbReference type="EC" id="2.7.1.30" evidence="1"/>
<dbReference type="EMBL" id="CP000048">
    <property type="protein sequence ID" value="AAX16756.1"/>
    <property type="molecule type" value="Genomic_DNA"/>
</dbReference>
<dbReference type="RefSeq" id="WP_012422013.1">
    <property type="nucleotide sequence ID" value="NZ_CP073136.1"/>
</dbReference>
<dbReference type="SMR" id="B2RZV0"/>
<dbReference type="KEGG" id="bhr:BH0241"/>
<dbReference type="HOGENOM" id="CLU_009281_2_3_12"/>
<dbReference type="UniPathway" id="UPA00618">
    <property type="reaction ID" value="UER00672"/>
</dbReference>
<dbReference type="Proteomes" id="UP000008834">
    <property type="component" value="Chromosome"/>
</dbReference>
<dbReference type="GO" id="GO:0005829">
    <property type="term" value="C:cytosol"/>
    <property type="evidence" value="ECO:0007669"/>
    <property type="project" value="TreeGrafter"/>
</dbReference>
<dbReference type="GO" id="GO:0005524">
    <property type="term" value="F:ATP binding"/>
    <property type="evidence" value="ECO:0007669"/>
    <property type="project" value="UniProtKB-UniRule"/>
</dbReference>
<dbReference type="GO" id="GO:0004370">
    <property type="term" value="F:glycerol kinase activity"/>
    <property type="evidence" value="ECO:0000250"/>
    <property type="project" value="UniProtKB"/>
</dbReference>
<dbReference type="GO" id="GO:0019563">
    <property type="term" value="P:glycerol catabolic process"/>
    <property type="evidence" value="ECO:0007669"/>
    <property type="project" value="UniProtKB-UniRule"/>
</dbReference>
<dbReference type="GO" id="GO:0006071">
    <property type="term" value="P:glycerol metabolic process"/>
    <property type="evidence" value="ECO:0000250"/>
    <property type="project" value="UniProtKB"/>
</dbReference>
<dbReference type="GO" id="GO:0006072">
    <property type="term" value="P:glycerol-3-phosphate metabolic process"/>
    <property type="evidence" value="ECO:0007669"/>
    <property type="project" value="InterPro"/>
</dbReference>
<dbReference type="CDD" id="cd07786">
    <property type="entry name" value="FGGY_EcGK_like"/>
    <property type="match status" value="1"/>
</dbReference>
<dbReference type="FunFam" id="3.30.420.40:FF:000007">
    <property type="entry name" value="Glycerol kinase"/>
    <property type="match status" value="1"/>
</dbReference>
<dbReference type="FunFam" id="3.30.420.40:FF:000008">
    <property type="entry name" value="Glycerol kinase"/>
    <property type="match status" value="1"/>
</dbReference>
<dbReference type="Gene3D" id="3.30.420.40">
    <property type="match status" value="2"/>
</dbReference>
<dbReference type="HAMAP" id="MF_00186">
    <property type="entry name" value="Glycerol_kin"/>
    <property type="match status" value="1"/>
</dbReference>
<dbReference type="InterPro" id="IPR043129">
    <property type="entry name" value="ATPase_NBD"/>
</dbReference>
<dbReference type="InterPro" id="IPR000577">
    <property type="entry name" value="Carb_kinase_FGGY"/>
</dbReference>
<dbReference type="InterPro" id="IPR018483">
    <property type="entry name" value="Carb_kinase_FGGY_CS"/>
</dbReference>
<dbReference type="InterPro" id="IPR018485">
    <property type="entry name" value="FGGY_C"/>
</dbReference>
<dbReference type="InterPro" id="IPR018484">
    <property type="entry name" value="FGGY_N"/>
</dbReference>
<dbReference type="InterPro" id="IPR005999">
    <property type="entry name" value="Glycerol_kin"/>
</dbReference>
<dbReference type="NCBIfam" id="TIGR01311">
    <property type="entry name" value="glycerol_kin"/>
    <property type="match status" value="1"/>
</dbReference>
<dbReference type="NCBIfam" id="NF000756">
    <property type="entry name" value="PRK00047.1"/>
    <property type="match status" value="1"/>
</dbReference>
<dbReference type="PANTHER" id="PTHR10196:SF69">
    <property type="entry name" value="GLYCEROL KINASE"/>
    <property type="match status" value="1"/>
</dbReference>
<dbReference type="PANTHER" id="PTHR10196">
    <property type="entry name" value="SUGAR KINASE"/>
    <property type="match status" value="1"/>
</dbReference>
<dbReference type="Pfam" id="PF02782">
    <property type="entry name" value="FGGY_C"/>
    <property type="match status" value="1"/>
</dbReference>
<dbReference type="Pfam" id="PF00370">
    <property type="entry name" value="FGGY_N"/>
    <property type="match status" value="1"/>
</dbReference>
<dbReference type="PIRSF" id="PIRSF000538">
    <property type="entry name" value="GlpK"/>
    <property type="match status" value="1"/>
</dbReference>
<dbReference type="SUPFAM" id="SSF53067">
    <property type="entry name" value="Actin-like ATPase domain"/>
    <property type="match status" value="2"/>
</dbReference>
<dbReference type="PROSITE" id="PS00933">
    <property type="entry name" value="FGGY_KINASES_1"/>
    <property type="match status" value="1"/>
</dbReference>
<dbReference type="PROSITE" id="PS00445">
    <property type="entry name" value="FGGY_KINASES_2"/>
    <property type="match status" value="1"/>
</dbReference>
<proteinExistence type="inferred from homology"/>
<protein>
    <recommendedName>
        <fullName evidence="1">Glycerol kinase</fullName>
        <ecNumber evidence="1">2.7.1.30</ecNumber>
    </recommendedName>
    <alternativeName>
        <fullName evidence="1">ATP:glycerol 3-phosphotransferase</fullName>
    </alternativeName>
    <alternativeName>
        <fullName evidence="1">Glycerokinase</fullName>
        <shortName evidence="1">GK</shortName>
    </alternativeName>
</protein>
<evidence type="ECO:0000255" key="1">
    <source>
        <dbReference type="HAMAP-Rule" id="MF_00186"/>
    </source>
</evidence>
<sequence>MKYILSLDQGTTSSRAVIFDKNANIKGFAKKEFKQIYPHPSWVEHDPNEIWGSLLGVMAEALANARTFPNNIEAIGITNQRETTIIWDRNTGHPIYNAIVWQDRRTAQLCDELKSKGKDKIFLQKTGLVLDAYFSGTKIKWILDNVAGARKRAEKGELCFGTIDTWIVWNLTKGKIHITDYSNASRTLLLNIKSLKWDCDLLQILDIPKSLLPELKQSSEVYGKTDASALGTEIIISGIAGDQFAATFGQACLQKGMAKNTYGTGCFVTVNIGKKPIINEQKILTSIAWGRKNSITYVFEGSVFIGGAVIQWLRDNLELFRKSGDAEAVAASVDNNGGIYFVPAFVGLGTPHWDPYARGMIIGLTRSSTKEHITRAALESIALQSFDVLTEMQNSIQEFEIKELRVDGGASKNNLLMQFQADILQCNVVRPKITETTALGSAYLAGLAVGYWESAEEITSLWKSDKIFEPSMEKSKREDLIYNWNKAIKRAKAWI</sequence>
<reference key="1">
    <citation type="submission" date="2004-12" db="EMBL/GenBank/DDBJ databases">
        <title>The genome sequence of Borrelia hermsii and Borrelia turicatae: comparative analysis of two agents of endemic N. America relapsing fever.</title>
        <authorList>
            <person name="Porcella S.F."/>
            <person name="Raffel S.J."/>
            <person name="Schrumpf M.E."/>
            <person name="Montgomery B."/>
            <person name="Smith T."/>
            <person name="Schwan T.G."/>
        </authorList>
    </citation>
    <scope>NUCLEOTIDE SEQUENCE [LARGE SCALE GENOMIC DNA]</scope>
    <source>
        <strain>HS1 / DAH</strain>
    </source>
</reference>
<accession>B2RZV0</accession>
<gene>
    <name evidence="1" type="primary">glpK</name>
    <name type="ordered locus">BH0241</name>
</gene>